<organism>
    <name type="scientific">Crotalus viridis viridis</name>
    <name type="common">Prairie rattlesnake</name>
    <dbReference type="NCBI Taxonomy" id="8742"/>
    <lineage>
        <taxon>Eukaryota</taxon>
        <taxon>Metazoa</taxon>
        <taxon>Chordata</taxon>
        <taxon>Craniata</taxon>
        <taxon>Vertebrata</taxon>
        <taxon>Euteleostomi</taxon>
        <taxon>Lepidosauria</taxon>
        <taxon>Squamata</taxon>
        <taxon>Bifurcata</taxon>
        <taxon>Unidentata</taxon>
        <taxon>Episquamata</taxon>
        <taxon>Toxicofera</taxon>
        <taxon>Serpentes</taxon>
        <taxon>Colubroidea</taxon>
        <taxon>Viperidae</taxon>
        <taxon>Crotalinae</taxon>
        <taxon>Crotalus</taxon>
    </lineage>
</organism>
<reference key="1">
    <citation type="journal article" date="1990" name="FEBS Lett.">
        <title>A new small myotoxin from the venom of the prairie rattlesnake (Crotalus viridis viridis).</title>
        <authorList>
            <person name="Griffin P.R."/>
            <person name="Aird S.D."/>
        </authorList>
    </citation>
    <scope>PROTEIN SEQUENCE</scope>
    <scope>MASS SPECTROMETRY</scope>
    <scope>SUBCELLULAR LOCATION</scope>
    <source>
        <tissue>Venom</tissue>
    </source>
</reference>
<dbReference type="PIR" id="S12909">
    <property type="entry name" value="S12909"/>
</dbReference>
<dbReference type="SMR" id="P63175"/>
<dbReference type="GO" id="GO:0005576">
    <property type="term" value="C:extracellular region"/>
    <property type="evidence" value="ECO:0007669"/>
    <property type="project" value="UniProtKB-SubCell"/>
</dbReference>
<dbReference type="GO" id="GO:0015459">
    <property type="term" value="F:potassium channel regulator activity"/>
    <property type="evidence" value="ECO:0007669"/>
    <property type="project" value="UniProtKB-KW"/>
</dbReference>
<dbReference type="GO" id="GO:0090729">
    <property type="term" value="F:toxin activity"/>
    <property type="evidence" value="ECO:0007669"/>
    <property type="project" value="UniProtKB-KW"/>
</dbReference>
<dbReference type="GO" id="GO:0044564">
    <property type="term" value="P:envenomation resulting in occlusion of the pore of voltage-gated potassium channel in another organism"/>
    <property type="evidence" value="ECO:0000250"/>
    <property type="project" value="UniProtKB"/>
</dbReference>
<dbReference type="FunFam" id="2.20.20.10:FF:000001">
    <property type="entry name" value="Crotamine"/>
    <property type="match status" value="1"/>
</dbReference>
<dbReference type="Gene3D" id="2.20.20.10">
    <property type="entry name" value="Anthopleurin-A"/>
    <property type="match status" value="1"/>
</dbReference>
<dbReference type="InterPro" id="IPR023355">
    <property type="entry name" value="Myo_ane_neurotoxin_sf"/>
</dbReference>
<dbReference type="InterPro" id="IPR000881">
    <property type="entry name" value="Myotoxin"/>
</dbReference>
<dbReference type="Pfam" id="PF00819">
    <property type="entry name" value="Myotoxins"/>
    <property type="match status" value="1"/>
</dbReference>
<dbReference type="PRINTS" id="PR00283">
    <property type="entry name" value="MYOTOXIN"/>
</dbReference>
<dbReference type="SUPFAM" id="SSF57392">
    <property type="entry name" value="Defensin-like"/>
    <property type="match status" value="1"/>
</dbReference>
<dbReference type="PROSITE" id="PS00459">
    <property type="entry name" value="MYOTOXINS_1"/>
    <property type="match status" value="1"/>
</dbReference>
<dbReference type="PROSITE" id="PS51345">
    <property type="entry name" value="MYOTOXINS_2"/>
    <property type="match status" value="1"/>
</dbReference>
<comment type="function">
    <text evidence="2">Cationic peptide that possesses multiple functions. It acts as a cell-penetrating peptide (CPP), and as a potent voltage-gated potassium channel (Kv) inhibitor. It exhibits antimicrobial activities, hind limb paralysis, and severe muscle necrosis by a non-enzymatic mechanism.</text>
</comment>
<comment type="subunit">
    <text evidence="1">Monomer.</text>
</comment>
<comment type="subcellular location">
    <subcellularLocation>
        <location evidence="3">Secreted</location>
    </subcellularLocation>
</comment>
<comment type="tissue specificity">
    <text evidence="5">Expressed by the venom gland.</text>
</comment>
<comment type="mass spectrometry">
    <molecule>Myotoxin-2</molecule>
</comment>
<comment type="mass spectrometry">
    <molecule>Myotoxin-4</molecule>
</comment>
<comment type="similarity">
    <text evidence="4">Belongs to the crotamine-myotoxin family.</text>
</comment>
<keyword id="KW-0929">Antimicrobial</keyword>
<keyword id="KW-0903">Direct protein sequencing</keyword>
<keyword id="KW-1015">Disulfide bond</keyword>
<keyword id="KW-0872">Ion channel impairing toxin</keyword>
<keyword id="KW-0959">Myotoxin</keyword>
<keyword id="KW-0528">Neurotoxin</keyword>
<keyword id="KW-0632">Potassium channel impairing toxin</keyword>
<keyword id="KW-0964">Secreted</keyword>
<keyword id="KW-0800">Toxin</keyword>
<keyword id="KW-1220">Voltage-gated potassium channel impairing toxin</keyword>
<sequence>YKRCHKKEGHCFPKTVICLPPSSDFGKMDCRWKWKCCKKGSVNNA</sequence>
<name>MYX2_CROVV</name>
<evidence type="ECO:0000250" key="1"/>
<evidence type="ECO:0000250" key="2">
    <source>
        <dbReference type="UniProtKB" id="Q9PWF3"/>
    </source>
</evidence>
<evidence type="ECO:0000269" key="3">
    <source>
    </source>
</evidence>
<evidence type="ECO:0000305" key="4"/>
<evidence type="ECO:0000305" key="5">
    <source>
    </source>
</evidence>
<protein>
    <recommendedName>
        <fullName>Myotoxin-2</fullName>
    </recommendedName>
    <component>
        <recommendedName>
            <fullName>Myotoxin-4</fullName>
        </recommendedName>
    </component>
</protein>
<accession>P63175</accession>
<accession>P19861</accession>
<proteinExistence type="evidence at protein level"/>
<feature type="chain" id="PRO_0000035177" description="Myotoxin-2" evidence="3">
    <location>
        <begin position="1"/>
        <end position="45"/>
    </location>
</feature>
<feature type="chain" id="PRO_0000035178" description="Myotoxin-4" evidence="3">
    <location>
        <begin position="1"/>
        <end position="43"/>
    </location>
</feature>
<feature type="disulfide bond" evidence="2">
    <location>
        <begin position="4"/>
        <end position="36"/>
    </location>
</feature>
<feature type="disulfide bond" evidence="2">
    <location>
        <begin position="11"/>
        <end position="30"/>
    </location>
</feature>
<feature type="disulfide bond" evidence="2">
    <location>
        <begin position="18"/>
        <end position="37"/>
    </location>
</feature>